<dbReference type="EC" id="2.1.1.182" evidence="1"/>
<dbReference type="EMBL" id="FM211187">
    <property type="protein sequence ID" value="CAR69755.1"/>
    <property type="molecule type" value="Genomic_DNA"/>
</dbReference>
<dbReference type="RefSeq" id="WP_001216856.1">
    <property type="nucleotide sequence ID" value="NC_011900.1"/>
</dbReference>
<dbReference type="SMR" id="B8ZNY9"/>
<dbReference type="KEGG" id="sne:SPN23F20050"/>
<dbReference type="HOGENOM" id="CLU_041220_0_0_9"/>
<dbReference type="GO" id="GO:0005829">
    <property type="term" value="C:cytosol"/>
    <property type="evidence" value="ECO:0007669"/>
    <property type="project" value="TreeGrafter"/>
</dbReference>
<dbReference type="GO" id="GO:0052908">
    <property type="term" value="F:16S rRNA (adenine(1518)-N(6)/adenine(1519)-N(6))-dimethyltransferase activity"/>
    <property type="evidence" value="ECO:0007669"/>
    <property type="project" value="UniProtKB-EC"/>
</dbReference>
<dbReference type="GO" id="GO:0003723">
    <property type="term" value="F:RNA binding"/>
    <property type="evidence" value="ECO:0007669"/>
    <property type="project" value="UniProtKB-KW"/>
</dbReference>
<dbReference type="CDD" id="cd02440">
    <property type="entry name" value="AdoMet_MTases"/>
    <property type="match status" value="1"/>
</dbReference>
<dbReference type="FunFam" id="1.10.8.100:FF:000005">
    <property type="entry name" value="Ribosomal RNA small subunit methyltransferase A"/>
    <property type="match status" value="1"/>
</dbReference>
<dbReference type="FunFam" id="3.40.50.150:FF:000023">
    <property type="entry name" value="Ribosomal RNA small subunit methyltransferase A"/>
    <property type="match status" value="1"/>
</dbReference>
<dbReference type="Gene3D" id="1.10.8.100">
    <property type="entry name" value="Ribosomal RNA adenine dimethylase-like, domain 2"/>
    <property type="match status" value="1"/>
</dbReference>
<dbReference type="Gene3D" id="3.40.50.150">
    <property type="entry name" value="Vaccinia Virus protein VP39"/>
    <property type="match status" value="1"/>
</dbReference>
<dbReference type="HAMAP" id="MF_00607">
    <property type="entry name" value="16SrRNA_methyltr_A"/>
    <property type="match status" value="1"/>
</dbReference>
<dbReference type="InterPro" id="IPR001737">
    <property type="entry name" value="KsgA/Erm"/>
</dbReference>
<dbReference type="InterPro" id="IPR023165">
    <property type="entry name" value="rRNA_Ade_diMease-like_C"/>
</dbReference>
<dbReference type="InterPro" id="IPR020596">
    <property type="entry name" value="rRNA_Ade_Mease_Trfase_CS"/>
</dbReference>
<dbReference type="InterPro" id="IPR020598">
    <property type="entry name" value="rRNA_Ade_methylase_Trfase_N"/>
</dbReference>
<dbReference type="InterPro" id="IPR011530">
    <property type="entry name" value="rRNA_adenine_dimethylase"/>
</dbReference>
<dbReference type="InterPro" id="IPR029063">
    <property type="entry name" value="SAM-dependent_MTases_sf"/>
</dbReference>
<dbReference type="NCBIfam" id="TIGR00755">
    <property type="entry name" value="ksgA"/>
    <property type="match status" value="1"/>
</dbReference>
<dbReference type="PANTHER" id="PTHR11727">
    <property type="entry name" value="DIMETHYLADENOSINE TRANSFERASE"/>
    <property type="match status" value="1"/>
</dbReference>
<dbReference type="PANTHER" id="PTHR11727:SF7">
    <property type="entry name" value="DIMETHYLADENOSINE TRANSFERASE-RELATED"/>
    <property type="match status" value="1"/>
</dbReference>
<dbReference type="Pfam" id="PF00398">
    <property type="entry name" value="RrnaAD"/>
    <property type="match status" value="1"/>
</dbReference>
<dbReference type="SMART" id="SM00650">
    <property type="entry name" value="rADc"/>
    <property type="match status" value="1"/>
</dbReference>
<dbReference type="SUPFAM" id="SSF53335">
    <property type="entry name" value="S-adenosyl-L-methionine-dependent methyltransferases"/>
    <property type="match status" value="1"/>
</dbReference>
<dbReference type="PROSITE" id="PS01131">
    <property type="entry name" value="RRNA_A_DIMETH"/>
    <property type="match status" value="1"/>
</dbReference>
<dbReference type="PROSITE" id="PS51689">
    <property type="entry name" value="SAM_RNA_A_N6_MT"/>
    <property type="match status" value="1"/>
</dbReference>
<sequence>MRIADYSVTKAVLERHGFTFKKSFGQNFLTDTNILQKIVDTAEIDDQVNVIEIGPGIGALTEFLAERAAQVMAFEIDHRLVPILADTLRDFDNVTVVNEDILKVDLAQHIQNFKNPDLPIKVVANLPYYITTPILMHLIESGIPFCEFVVMMQKEVADRISAQPNTKAYGSLSIAVQYYMTAKVAFIVPRTVFVPAPNVDSAILKMVRRPEPAVAVEDENFFFKVSKASFTHRRKTLWNNLTGYFGKTEEVKDKLTKALDQAGLSPSVRGEALSLAEFAGLADALKGQGL</sequence>
<evidence type="ECO:0000255" key="1">
    <source>
        <dbReference type="HAMAP-Rule" id="MF_00607"/>
    </source>
</evidence>
<gene>
    <name evidence="1" type="primary">rsmA</name>
    <name evidence="1" type="synonym">ksgA</name>
    <name type="ordered locus">SPN23F20050</name>
</gene>
<reference key="1">
    <citation type="journal article" date="2009" name="J. Bacteriol.">
        <title>Role of conjugative elements in the evolution of the multidrug-resistant pandemic clone Streptococcus pneumoniae Spain23F ST81.</title>
        <authorList>
            <person name="Croucher N.J."/>
            <person name="Walker D."/>
            <person name="Romero P."/>
            <person name="Lennard N."/>
            <person name="Paterson G.K."/>
            <person name="Bason N.C."/>
            <person name="Mitchell A.M."/>
            <person name="Quail M.A."/>
            <person name="Andrew P.W."/>
            <person name="Parkhill J."/>
            <person name="Bentley S.D."/>
            <person name="Mitchell T.J."/>
        </authorList>
    </citation>
    <scope>NUCLEOTIDE SEQUENCE [LARGE SCALE GENOMIC DNA]</scope>
    <source>
        <strain>ATCC 700669 / Spain 23F-1</strain>
    </source>
</reference>
<comment type="function">
    <text evidence="1">Specifically dimethylates two adjacent adenosines (A1518 and A1519) in the loop of a conserved hairpin near the 3'-end of 16S rRNA in the 30S particle. May play a critical role in biogenesis of 30S subunits.</text>
</comment>
<comment type="catalytic activity">
    <reaction evidence="1">
        <text>adenosine(1518)/adenosine(1519) in 16S rRNA + 4 S-adenosyl-L-methionine = N(6)-dimethyladenosine(1518)/N(6)-dimethyladenosine(1519) in 16S rRNA + 4 S-adenosyl-L-homocysteine + 4 H(+)</text>
        <dbReference type="Rhea" id="RHEA:19609"/>
        <dbReference type="Rhea" id="RHEA-COMP:10232"/>
        <dbReference type="Rhea" id="RHEA-COMP:10233"/>
        <dbReference type="ChEBI" id="CHEBI:15378"/>
        <dbReference type="ChEBI" id="CHEBI:57856"/>
        <dbReference type="ChEBI" id="CHEBI:59789"/>
        <dbReference type="ChEBI" id="CHEBI:74411"/>
        <dbReference type="ChEBI" id="CHEBI:74493"/>
        <dbReference type="EC" id="2.1.1.182"/>
    </reaction>
</comment>
<comment type="subcellular location">
    <subcellularLocation>
        <location evidence="1">Cytoplasm</location>
    </subcellularLocation>
</comment>
<comment type="similarity">
    <text evidence="1">Belongs to the class I-like SAM-binding methyltransferase superfamily. rRNA adenine N(6)-methyltransferase family. RsmA subfamily.</text>
</comment>
<keyword id="KW-0963">Cytoplasm</keyword>
<keyword id="KW-0489">Methyltransferase</keyword>
<keyword id="KW-0694">RNA-binding</keyword>
<keyword id="KW-0698">rRNA processing</keyword>
<keyword id="KW-0949">S-adenosyl-L-methionine</keyword>
<keyword id="KW-0808">Transferase</keyword>
<feature type="chain" id="PRO_1000194402" description="Ribosomal RNA small subunit methyltransferase A">
    <location>
        <begin position="1"/>
        <end position="290"/>
    </location>
</feature>
<feature type="binding site" evidence="1">
    <location>
        <position position="27"/>
    </location>
    <ligand>
        <name>S-adenosyl-L-methionine</name>
        <dbReference type="ChEBI" id="CHEBI:59789"/>
    </ligand>
</feature>
<feature type="binding site" evidence="1">
    <location>
        <position position="29"/>
    </location>
    <ligand>
        <name>S-adenosyl-L-methionine</name>
        <dbReference type="ChEBI" id="CHEBI:59789"/>
    </ligand>
</feature>
<feature type="binding site" evidence="1">
    <location>
        <position position="54"/>
    </location>
    <ligand>
        <name>S-adenosyl-L-methionine</name>
        <dbReference type="ChEBI" id="CHEBI:59789"/>
    </ligand>
</feature>
<feature type="binding site" evidence="1">
    <location>
        <position position="75"/>
    </location>
    <ligand>
        <name>S-adenosyl-L-methionine</name>
        <dbReference type="ChEBI" id="CHEBI:59789"/>
    </ligand>
</feature>
<feature type="binding site" evidence="1">
    <location>
        <position position="100"/>
    </location>
    <ligand>
        <name>S-adenosyl-L-methionine</name>
        <dbReference type="ChEBI" id="CHEBI:59789"/>
    </ligand>
</feature>
<feature type="binding site" evidence="1">
    <location>
        <position position="125"/>
    </location>
    <ligand>
        <name>S-adenosyl-L-methionine</name>
        <dbReference type="ChEBI" id="CHEBI:59789"/>
    </ligand>
</feature>
<proteinExistence type="inferred from homology"/>
<organism>
    <name type="scientific">Streptococcus pneumoniae (strain ATCC 700669 / Spain 23F-1)</name>
    <dbReference type="NCBI Taxonomy" id="561276"/>
    <lineage>
        <taxon>Bacteria</taxon>
        <taxon>Bacillati</taxon>
        <taxon>Bacillota</taxon>
        <taxon>Bacilli</taxon>
        <taxon>Lactobacillales</taxon>
        <taxon>Streptococcaceae</taxon>
        <taxon>Streptococcus</taxon>
    </lineage>
</organism>
<accession>B8ZNY9</accession>
<name>RSMA_STRPJ</name>
<protein>
    <recommendedName>
        <fullName evidence="1">Ribosomal RNA small subunit methyltransferase A</fullName>
        <ecNumber evidence="1">2.1.1.182</ecNumber>
    </recommendedName>
    <alternativeName>
        <fullName evidence="1">16S rRNA (adenine(1518)-N(6)/adenine(1519)-N(6))-dimethyltransferase</fullName>
    </alternativeName>
    <alternativeName>
        <fullName evidence="1">16S rRNA dimethyladenosine transferase</fullName>
    </alternativeName>
    <alternativeName>
        <fullName evidence="1">16S rRNA dimethylase</fullName>
    </alternativeName>
    <alternativeName>
        <fullName evidence="1">S-adenosylmethionine-6-N', N'-adenosyl(rRNA) dimethyltransferase</fullName>
    </alternativeName>
</protein>